<accession>P16005</accession>
<gene>
    <name type="primary">CHRNB1</name>
</gene>
<evidence type="ECO:0000250" key="1">
    <source>
        <dbReference type="UniProtKB" id="P04758"/>
    </source>
</evidence>
<evidence type="ECO:0000305" key="2"/>
<sequence length="118" mass="12627">APTVALLLLCALCSAADAPPPPPSAAASADGAYHAGVRPAPTPRDRVEVRVGLSLAQLVSLDEKNEELTTKVYLDLSWWDPRLQWDPHDYGGLGGLRVAASRLWLPDIGLDNNNDGEF</sequence>
<keyword id="KW-1003">Cell membrane</keyword>
<keyword id="KW-0407">Ion channel</keyword>
<keyword id="KW-0406">Ion transport</keyword>
<keyword id="KW-1071">Ligand-gated ion channel</keyword>
<keyword id="KW-0472">Membrane</keyword>
<keyword id="KW-0628">Postsynaptic cell membrane</keyword>
<keyword id="KW-0675">Receptor</keyword>
<keyword id="KW-1185">Reference proteome</keyword>
<keyword id="KW-0732">Signal</keyword>
<keyword id="KW-0770">Synapse</keyword>
<keyword id="KW-0812">Transmembrane</keyword>
<keyword id="KW-0813">Transport</keyword>
<comment type="function">
    <text>After binding acetylcholine, the AChR responds by an extensive change in conformation that affects all subunits and leads to opening of an ion-conducting channel across the plasma membrane.</text>
</comment>
<comment type="catalytic activity">
    <reaction evidence="1">
        <text>K(+)(in) = K(+)(out)</text>
        <dbReference type="Rhea" id="RHEA:29463"/>
        <dbReference type="ChEBI" id="CHEBI:29103"/>
    </reaction>
</comment>
<comment type="catalytic activity">
    <reaction evidence="1">
        <text>Na(+)(in) = Na(+)(out)</text>
        <dbReference type="Rhea" id="RHEA:34963"/>
        <dbReference type="ChEBI" id="CHEBI:29101"/>
    </reaction>
</comment>
<comment type="subunit">
    <text>Pentamer of two alpha chains, and one each of the beta, delta, and gamma chains.</text>
</comment>
<comment type="subcellular location">
    <subcellularLocation>
        <location>Postsynaptic cell membrane</location>
        <topology>Multi-pass membrane protein</topology>
    </subcellularLocation>
    <subcellularLocation>
        <location>Cell membrane</location>
        <topology>Multi-pass membrane protein</topology>
    </subcellularLocation>
</comment>
<comment type="similarity">
    <text evidence="2">Belongs to the ligand-gated ion channel (TC 1.A.9) family. Acetylcholine receptor (TC 1.A.9.1) subfamily. Beta-1/CHRNB1 sub-subfamily.</text>
</comment>
<feature type="signal peptide">
    <location>
        <begin position="1" status="less than"/>
        <end position="15"/>
    </location>
</feature>
<feature type="chain" id="PRO_0000000318" description="Acetylcholine receptor subunit beta">
    <location>
        <begin position="16"/>
        <end position="118" status="greater than"/>
    </location>
</feature>
<feature type="non-terminal residue">
    <location>
        <position position="1"/>
    </location>
</feature>
<feature type="non-terminal residue">
    <location>
        <position position="118"/>
    </location>
</feature>
<organism>
    <name type="scientific">Gallus gallus</name>
    <name type="common">Chicken</name>
    <dbReference type="NCBI Taxonomy" id="9031"/>
    <lineage>
        <taxon>Eukaryota</taxon>
        <taxon>Metazoa</taxon>
        <taxon>Chordata</taxon>
        <taxon>Craniata</taxon>
        <taxon>Vertebrata</taxon>
        <taxon>Euteleostomi</taxon>
        <taxon>Archelosauria</taxon>
        <taxon>Archosauria</taxon>
        <taxon>Dinosauria</taxon>
        <taxon>Saurischia</taxon>
        <taxon>Theropoda</taxon>
        <taxon>Coelurosauria</taxon>
        <taxon>Aves</taxon>
        <taxon>Neognathae</taxon>
        <taxon>Galloanserae</taxon>
        <taxon>Galliformes</taxon>
        <taxon>Phasianidae</taxon>
        <taxon>Phasianinae</taxon>
        <taxon>Gallus</taxon>
    </lineage>
</organism>
<dbReference type="EMBL" id="M31494">
    <property type="protein sequence ID" value="AAA48562.1"/>
    <property type="molecule type" value="mRNA"/>
</dbReference>
<dbReference type="PIR" id="A32673">
    <property type="entry name" value="A32673"/>
</dbReference>
<dbReference type="SMR" id="P16005"/>
<dbReference type="ComplexPortal" id="CPX-254">
    <property type="entry name" value="Muscle-type nicotinic acetylcholine receptor complex, alpha1-beta1-delta-gamma"/>
</dbReference>
<dbReference type="FunCoup" id="P16005">
    <property type="interactions" value="55"/>
</dbReference>
<dbReference type="STRING" id="9031.ENSGALP00000066381"/>
<dbReference type="GlyGen" id="P16005">
    <property type="glycosylation" value="1 site"/>
</dbReference>
<dbReference type="InParanoid" id="P16005"/>
<dbReference type="PhylomeDB" id="P16005"/>
<dbReference type="Proteomes" id="UP000000539">
    <property type="component" value="Unassembled WGS sequence"/>
</dbReference>
<dbReference type="GO" id="GO:0045211">
    <property type="term" value="C:postsynaptic membrane"/>
    <property type="evidence" value="ECO:0007669"/>
    <property type="project" value="UniProtKB-SubCell"/>
</dbReference>
<dbReference type="GO" id="GO:0022848">
    <property type="term" value="F:acetylcholine-gated monoatomic cation-selective channel activity"/>
    <property type="evidence" value="ECO:0007669"/>
    <property type="project" value="InterPro"/>
</dbReference>
<dbReference type="GO" id="GO:0004888">
    <property type="term" value="F:transmembrane signaling receptor activity"/>
    <property type="evidence" value="ECO:0007669"/>
    <property type="project" value="InterPro"/>
</dbReference>
<dbReference type="Gene3D" id="2.70.170.10">
    <property type="entry name" value="Neurotransmitter-gated ion-channel ligand-binding domain"/>
    <property type="match status" value="1"/>
</dbReference>
<dbReference type="InterPro" id="IPR006202">
    <property type="entry name" value="Neur_chan_lig-bd"/>
</dbReference>
<dbReference type="InterPro" id="IPR036734">
    <property type="entry name" value="Neur_chan_lig-bd_sf"/>
</dbReference>
<dbReference type="InterPro" id="IPR006201">
    <property type="entry name" value="Neur_channel"/>
</dbReference>
<dbReference type="InterPro" id="IPR002394">
    <property type="entry name" value="Nicotinic_acetylcholine_rcpt"/>
</dbReference>
<dbReference type="PANTHER" id="PTHR18945">
    <property type="entry name" value="NEUROTRANSMITTER GATED ION CHANNEL"/>
    <property type="match status" value="1"/>
</dbReference>
<dbReference type="Pfam" id="PF02931">
    <property type="entry name" value="Neur_chan_LBD"/>
    <property type="match status" value="1"/>
</dbReference>
<dbReference type="PRINTS" id="PR00254">
    <property type="entry name" value="NICOTINICR"/>
</dbReference>
<dbReference type="SUPFAM" id="SSF63712">
    <property type="entry name" value="Nicotinic receptor ligand binding domain-like"/>
    <property type="match status" value="1"/>
</dbReference>
<reference key="1">
    <citation type="journal article" date="1989" name="J. Biol. Chem.">
        <title>Development expression of the genes encoding the four subunits of the chicken muscle acetylcholine receptor.</title>
        <authorList>
            <person name="Moss S.J."/>
            <person name="Darlison M.G."/>
            <person name="Beeson D.M.W."/>
            <person name="Barnard E.A."/>
        </authorList>
    </citation>
    <scope>NUCLEOTIDE SEQUENCE [MRNA]</scope>
</reference>
<protein>
    <recommendedName>
        <fullName>Acetylcholine receptor subunit beta</fullName>
    </recommendedName>
</protein>
<proteinExistence type="evidence at transcript level"/>
<name>ACHB_CHICK</name>